<accession>Q161H1</accession>
<comment type="function">
    <text evidence="2">Catalyzes the formation of N(7)-methylguanine at position 46 (m7G46) in tRNA.</text>
</comment>
<comment type="catalytic activity">
    <reaction evidence="2">
        <text>guanosine(46) in tRNA + S-adenosyl-L-methionine = N(7)-methylguanosine(46) in tRNA + S-adenosyl-L-homocysteine</text>
        <dbReference type="Rhea" id="RHEA:42708"/>
        <dbReference type="Rhea" id="RHEA-COMP:10188"/>
        <dbReference type="Rhea" id="RHEA-COMP:10189"/>
        <dbReference type="ChEBI" id="CHEBI:57856"/>
        <dbReference type="ChEBI" id="CHEBI:59789"/>
        <dbReference type="ChEBI" id="CHEBI:74269"/>
        <dbReference type="ChEBI" id="CHEBI:74480"/>
        <dbReference type="EC" id="2.1.1.33"/>
    </reaction>
</comment>
<comment type="pathway">
    <text evidence="2">tRNA modification; N(7)-methylguanine-tRNA biosynthesis.</text>
</comment>
<comment type="similarity">
    <text evidence="2">Belongs to the class I-like SAM-binding methyltransferase superfamily. TrmB family.</text>
</comment>
<sequence length="233" mass="26531">MSKQTRPHRNFYGRLKGKSLKAAQKRYLDEDLAALSPGAVGWEENPDRRPLDLPGLFEGKPVWLEIGFGGGEHLVHQAAQNPDIGIIGAEPYINGVAMLLGKIRRAGVENLAVHAGDARDLMDVLPAASIDRAFLLYPDPWPKARHHRRRFVTAEHLDPLARALKPGSVFRVATDIEDYVRQTLQEVPKHGFKWLANAPQDWRRPWPDWISTRYEQKALREGRTPHYLTFVRE</sequence>
<gene>
    <name evidence="2" type="primary">trmB</name>
    <name type="ordered locus">RD1_3915</name>
</gene>
<dbReference type="EC" id="2.1.1.33" evidence="2"/>
<dbReference type="EMBL" id="CP000362">
    <property type="protein sequence ID" value="ABG33372.1"/>
    <property type="molecule type" value="Genomic_DNA"/>
</dbReference>
<dbReference type="RefSeq" id="WP_011569983.1">
    <property type="nucleotide sequence ID" value="NC_008209.1"/>
</dbReference>
<dbReference type="SMR" id="Q161H1"/>
<dbReference type="STRING" id="375451.RD1_3915"/>
<dbReference type="KEGG" id="rde:RD1_3915"/>
<dbReference type="eggNOG" id="COG0220">
    <property type="taxonomic scope" value="Bacteria"/>
</dbReference>
<dbReference type="HOGENOM" id="CLU_050910_0_3_5"/>
<dbReference type="OrthoDB" id="9802090at2"/>
<dbReference type="UniPathway" id="UPA00989"/>
<dbReference type="Proteomes" id="UP000007029">
    <property type="component" value="Chromosome"/>
</dbReference>
<dbReference type="GO" id="GO:0043527">
    <property type="term" value="C:tRNA methyltransferase complex"/>
    <property type="evidence" value="ECO:0007669"/>
    <property type="project" value="TreeGrafter"/>
</dbReference>
<dbReference type="GO" id="GO:0008176">
    <property type="term" value="F:tRNA (guanine(46)-N7)-methyltransferase activity"/>
    <property type="evidence" value="ECO:0007669"/>
    <property type="project" value="UniProtKB-UniRule"/>
</dbReference>
<dbReference type="Gene3D" id="3.40.50.150">
    <property type="entry name" value="Vaccinia Virus protein VP39"/>
    <property type="match status" value="1"/>
</dbReference>
<dbReference type="HAMAP" id="MF_01057">
    <property type="entry name" value="tRNA_methyltr_TrmB"/>
    <property type="match status" value="1"/>
</dbReference>
<dbReference type="InterPro" id="IPR029063">
    <property type="entry name" value="SAM-dependent_MTases_sf"/>
</dbReference>
<dbReference type="InterPro" id="IPR003358">
    <property type="entry name" value="tRNA_(Gua-N-7)_MeTrfase_Trmb"/>
</dbReference>
<dbReference type="InterPro" id="IPR055361">
    <property type="entry name" value="tRNA_methyltr_TrmB_bact"/>
</dbReference>
<dbReference type="NCBIfam" id="TIGR00091">
    <property type="entry name" value="tRNA (guanosine(46)-N7)-methyltransferase TrmB"/>
    <property type="match status" value="1"/>
</dbReference>
<dbReference type="PANTHER" id="PTHR23417">
    <property type="entry name" value="3-DEOXY-D-MANNO-OCTULOSONIC-ACID TRANSFERASE/TRNA GUANINE-N 7 - -METHYLTRANSFERASE"/>
    <property type="match status" value="1"/>
</dbReference>
<dbReference type="PANTHER" id="PTHR23417:SF14">
    <property type="entry name" value="PENTACOTRIPEPTIDE-REPEAT REGION OF PRORP DOMAIN-CONTAINING PROTEIN"/>
    <property type="match status" value="1"/>
</dbReference>
<dbReference type="Pfam" id="PF02390">
    <property type="entry name" value="Methyltransf_4"/>
    <property type="match status" value="1"/>
</dbReference>
<dbReference type="SUPFAM" id="SSF53335">
    <property type="entry name" value="S-adenosyl-L-methionine-dependent methyltransferases"/>
    <property type="match status" value="1"/>
</dbReference>
<dbReference type="PROSITE" id="PS51625">
    <property type="entry name" value="SAM_MT_TRMB"/>
    <property type="match status" value="1"/>
</dbReference>
<proteinExistence type="inferred from homology"/>
<reference key="1">
    <citation type="journal article" date="2007" name="J. Bacteriol.">
        <title>The complete genome sequence of Roseobacter denitrificans reveals a mixotrophic rather than photosynthetic metabolism.</title>
        <authorList>
            <person name="Swingley W.D."/>
            <person name="Sadekar S."/>
            <person name="Mastrian S.D."/>
            <person name="Matthies H.J."/>
            <person name="Hao J."/>
            <person name="Ramos H."/>
            <person name="Acharya C.R."/>
            <person name="Conrad A.L."/>
            <person name="Taylor H.L."/>
            <person name="Dejesa L.C."/>
            <person name="Shah M.K."/>
            <person name="O'Huallachain M.E."/>
            <person name="Lince M.T."/>
            <person name="Blankenship R.E."/>
            <person name="Beatty J.T."/>
            <person name="Touchman J.W."/>
        </authorList>
    </citation>
    <scope>NUCLEOTIDE SEQUENCE [LARGE SCALE GENOMIC DNA]</scope>
    <source>
        <strain>ATCC 33942 / OCh 114</strain>
    </source>
</reference>
<protein>
    <recommendedName>
        <fullName evidence="2">tRNA (guanine-N(7)-)-methyltransferase</fullName>
        <ecNumber evidence="2">2.1.1.33</ecNumber>
    </recommendedName>
    <alternativeName>
        <fullName evidence="2">tRNA (guanine(46)-N(7))-methyltransferase</fullName>
    </alternativeName>
    <alternativeName>
        <fullName evidence="2">tRNA(m7G46)-methyltransferase</fullName>
    </alternativeName>
</protein>
<keyword id="KW-0489">Methyltransferase</keyword>
<keyword id="KW-1185">Reference proteome</keyword>
<keyword id="KW-0949">S-adenosyl-L-methionine</keyword>
<keyword id="KW-0808">Transferase</keyword>
<keyword id="KW-0819">tRNA processing</keyword>
<organism>
    <name type="scientific">Roseobacter denitrificans (strain ATCC 33942 / OCh 114)</name>
    <name type="common">Erythrobacter sp. (strain OCh 114)</name>
    <name type="synonym">Roseobacter denitrificans</name>
    <dbReference type="NCBI Taxonomy" id="375451"/>
    <lineage>
        <taxon>Bacteria</taxon>
        <taxon>Pseudomonadati</taxon>
        <taxon>Pseudomonadota</taxon>
        <taxon>Alphaproteobacteria</taxon>
        <taxon>Rhodobacterales</taxon>
        <taxon>Roseobacteraceae</taxon>
        <taxon>Roseobacter</taxon>
    </lineage>
</organism>
<name>TRMB_ROSDO</name>
<evidence type="ECO:0000250" key="1"/>
<evidence type="ECO:0000255" key="2">
    <source>
        <dbReference type="HAMAP-Rule" id="MF_01057"/>
    </source>
</evidence>
<feature type="chain" id="PRO_0000288217" description="tRNA (guanine-N(7)-)-methyltransferase">
    <location>
        <begin position="1"/>
        <end position="233"/>
    </location>
</feature>
<feature type="active site" evidence="1">
    <location>
        <position position="139"/>
    </location>
</feature>
<feature type="binding site" evidence="2">
    <location>
        <position position="65"/>
    </location>
    <ligand>
        <name>S-adenosyl-L-methionine</name>
        <dbReference type="ChEBI" id="CHEBI:59789"/>
    </ligand>
</feature>
<feature type="binding site" evidence="2">
    <location>
        <position position="90"/>
    </location>
    <ligand>
        <name>S-adenosyl-L-methionine</name>
        <dbReference type="ChEBI" id="CHEBI:59789"/>
    </ligand>
</feature>
<feature type="binding site" evidence="2">
    <location>
        <position position="117"/>
    </location>
    <ligand>
        <name>S-adenosyl-L-methionine</name>
        <dbReference type="ChEBI" id="CHEBI:59789"/>
    </ligand>
</feature>
<feature type="binding site" evidence="2">
    <location>
        <position position="139"/>
    </location>
    <ligand>
        <name>S-adenosyl-L-methionine</name>
        <dbReference type="ChEBI" id="CHEBI:59789"/>
    </ligand>
</feature>
<feature type="binding site" evidence="2">
    <location>
        <position position="143"/>
    </location>
    <ligand>
        <name>substrate</name>
    </ligand>
</feature>
<feature type="binding site" evidence="2">
    <location>
        <position position="175"/>
    </location>
    <ligand>
        <name>substrate</name>
    </ligand>
</feature>
<feature type="binding site" evidence="2">
    <location>
        <begin position="212"/>
        <end position="215"/>
    </location>
    <ligand>
        <name>substrate</name>
    </ligand>
</feature>